<reference key="1">
    <citation type="journal article" date="2010" name="J. Bacteriol.">
        <title>Whole genome sequences of two Xylella fastidiosa strains (M12 and M23) causing almond leaf scorch disease in California.</title>
        <authorList>
            <person name="Chen J."/>
            <person name="Xie G."/>
            <person name="Han S."/>
            <person name="Chertkov O."/>
            <person name="Sims D."/>
            <person name="Civerolo E.L."/>
        </authorList>
    </citation>
    <scope>NUCLEOTIDE SEQUENCE [LARGE SCALE GENOMIC DNA]</scope>
    <source>
        <strain>M12</strain>
    </source>
</reference>
<proteinExistence type="inferred from homology"/>
<dbReference type="EC" id="6.3.4.4" evidence="1"/>
<dbReference type="EMBL" id="CP000941">
    <property type="protein sequence ID" value="ACA12677.1"/>
    <property type="molecule type" value="Genomic_DNA"/>
</dbReference>
<dbReference type="RefSeq" id="WP_004083580.1">
    <property type="nucleotide sequence ID" value="NC_010513.1"/>
</dbReference>
<dbReference type="SMR" id="B0U498"/>
<dbReference type="KEGG" id="xfm:Xfasm12_1784"/>
<dbReference type="HOGENOM" id="CLU_029848_0_0_6"/>
<dbReference type="UniPathway" id="UPA00075">
    <property type="reaction ID" value="UER00335"/>
</dbReference>
<dbReference type="GO" id="GO:0005737">
    <property type="term" value="C:cytoplasm"/>
    <property type="evidence" value="ECO:0007669"/>
    <property type="project" value="UniProtKB-SubCell"/>
</dbReference>
<dbReference type="GO" id="GO:0004019">
    <property type="term" value="F:adenylosuccinate synthase activity"/>
    <property type="evidence" value="ECO:0007669"/>
    <property type="project" value="UniProtKB-UniRule"/>
</dbReference>
<dbReference type="GO" id="GO:0005525">
    <property type="term" value="F:GTP binding"/>
    <property type="evidence" value="ECO:0007669"/>
    <property type="project" value="UniProtKB-UniRule"/>
</dbReference>
<dbReference type="GO" id="GO:0000287">
    <property type="term" value="F:magnesium ion binding"/>
    <property type="evidence" value="ECO:0007669"/>
    <property type="project" value="UniProtKB-UniRule"/>
</dbReference>
<dbReference type="GO" id="GO:0044208">
    <property type="term" value="P:'de novo' AMP biosynthetic process"/>
    <property type="evidence" value="ECO:0007669"/>
    <property type="project" value="UniProtKB-UniRule"/>
</dbReference>
<dbReference type="GO" id="GO:0046040">
    <property type="term" value="P:IMP metabolic process"/>
    <property type="evidence" value="ECO:0007669"/>
    <property type="project" value="TreeGrafter"/>
</dbReference>
<dbReference type="CDD" id="cd03108">
    <property type="entry name" value="AdSS"/>
    <property type="match status" value="1"/>
</dbReference>
<dbReference type="FunFam" id="1.10.300.10:FF:000001">
    <property type="entry name" value="Adenylosuccinate synthetase"/>
    <property type="match status" value="1"/>
</dbReference>
<dbReference type="FunFam" id="3.90.170.10:FF:000001">
    <property type="entry name" value="Adenylosuccinate synthetase"/>
    <property type="match status" value="1"/>
</dbReference>
<dbReference type="Gene3D" id="3.40.440.10">
    <property type="entry name" value="Adenylosuccinate Synthetase, subunit A, domain 1"/>
    <property type="match status" value="1"/>
</dbReference>
<dbReference type="Gene3D" id="1.10.300.10">
    <property type="entry name" value="Adenylosuccinate Synthetase, subunit A, domain 2"/>
    <property type="match status" value="1"/>
</dbReference>
<dbReference type="Gene3D" id="3.90.170.10">
    <property type="entry name" value="Adenylosuccinate Synthetase, subunit A, domain 3"/>
    <property type="match status" value="1"/>
</dbReference>
<dbReference type="HAMAP" id="MF_00011">
    <property type="entry name" value="Adenylosucc_synth"/>
    <property type="match status" value="1"/>
</dbReference>
<dbReference type="InterPro" id="IPR018220">
    <property type="entry name" value="Adenylosuccin_syn_GTP-bd"/>
</dbReference>
<dbReference type="InterPro" id="IPR033128">
    <property type="entry name" value="Adenylosuccin_syn_Lys_AS"/>
</dbReference>
<dbReference type="InterPro" id="IPR042109">
    <property type="entry name" value="Adenylosuccinate_synth_dom1"/>
</dbReference>
<dbReference type="InterPro" id="IPR042110">
    <property type="entry name" value="Adenylosuccinate_synth_dom2"/>
</dbReference>
<dbReference type="InterPro" id="IPR042111">
    <property type="entry name" value="Adenylosuccinate_synth_dom3"/>
</dbReference>
<dbReference type="InterPro" id="IPR001114">
    <property type="entry name" value="Adenylosuccinate_synthetase"/>
</dbReference>
<dbReference type="InterPro" id="IPR027417">
    <property type="entry name" value="P-loop_NTPase"/>
</dbReference>
<dbReference type="NCBIfam" id="NF002223">
    <property type="entry name" value="PRK01117.1"/>
    <property type="match status" value="1"/>
</dbReference>
<dbReference type="NCBIfam" id="TIGR00184">
    <property type="entry name" value="purA"/>
    <property type="match status" value="1"/>
</dbReference>
<dbReference type="PANTHER" id="PTHR11846">
    <property type="entry name" value="ADENYLOSUCCINATE SYNTHETASE"/>
    <property type="match status" value="1"/>
</dbReference>
<dbReference type="PANTHER" id="PTHR11846:SF0">
    <property type="entry name" value="ADENYLOSUCCINATE SYNTHETASE"/>
    <property type="match status" value="1"/>
</dbReference>
<dbReference type="Pfam" id="PF00709">
    <property type="entry name" value="Adenylsucc_synt"/>
    <property type="match status" value="1"/>
</dbReference>
<dbReference type="SMART" id="SM00788">
    <property type="entry name" value="Adenylsucc_synt"/>
    <property type="match status" value="1"/>
</dbReference>
<dbReference type="SUPFAM" id="SSF52540">
    <property type="entry name" value="P-loop containing nucleoside triphosphate hydrolases"/>
    <property type="match status" value="1"/>
</dbReference>
<dbReference type="PROSITE" id="PS01266">
    <property type="entry name" value="ADENYLOSUCCIN_SYN_1"/>
    <property type="match status" value="1"/>
</dbReference>
<dbReference type="PROSITE" id="PS00513">
    <property type="entry name" value="ADENYLOSUCCIN_SYN_2"/>
    <property type="match status" value="1"/>
</dbReference>
<feature type="chain" id="PRO_1000089355" description="Adenylosuccinate synthetase">
    <location>
        <begin position="1"/>
        <end position="430"/>
    </location>
</feature>
<feature type="active site" description="Proton acceptor" evidence="1">
    <location>
        <position position="14"/>
    </location>
</feature>
<feature type="active site" description="Proton donor" evidence="1">
    <location>
        <position position="42"/>
    </location>
</feature>
<feature type="binding site" evidence="1">
    <location>
        <begin position="13"/>
        <end position="19"/>
    </location>
    <ligand>
        <name>GTP</name>
        <dbReference type="ChEBI" id="CHEBI:37565"/>
    </ligand>
</feature>
<feature type="binding site" description="in other chain" evidence="1">
    <location>
        <begin position="14"/>
        <end position="17"/>
    </location>
    <ligand>
        <name>IMP</name>
        <dbReference type="ChEBI" id="CHEBI:58053"/>
        <note>ligand shared between dimeric partners</note>
    </ligand>
</feature>
<feature type="binding site" evidence="1">
    <location>
        <position position="14"/>
    </location>
    <ligand>
        <name>Mg(2+)</name>
        <dbReference type="ChEBI" id="CHEBI:18420"/>
    </ligand>
</feature>
<feature type="binding site" description="in other chain" evidence="1">
    <location>
        <begin position="39"/>
        <end position="42"/>
    </location>
    <ligand>
        <name>IMP</name>
        <dbReference type="ChEBI" id="CHEBI:58053"/>
        <note>ligand shared between dimeric partners</note>
    </ligand>
</feature>
<feature type="binding site" evidence="1">
    <location>
        <begin position="41"/>
        <end position="43"/>
    </location>
    <ligand>
        <name>GTP</name>
        <dbReference type="ChEBI" id="CHEBI:37565"/>
    </ligand>
</feature>
<feature type="binding site" evidence="1">
    <location>
        <position position="41"/>
    </location>
    <ligand>
        <name>Mg(2+)</name>
        <dbReference type="ChEBI" id="CHEBI:18420"/>
    </ligand>
</feature>
<feature type="binding site" description="in other chain" evidence="1">
    <location>
        <position position="130"/>
    </location>
    <ligand>
        <name>IMP</name>
        <dbReference type="ChEBI" id="CHEBI:58053"/>
        <note>ligand shared between dimeric partners</note>
    </ligand>
</feature>
<feature type="binding site" evidence="1">
    <location>
        <position position="144"/>
    </location>
    <ligand>
        <name>IMP</name>
        <dbReference type="ChEBI" id="CHEBI:58053"/>
        <note>ligand shared between dimeric partners</note>
    </ligand>
</feature>
<feature type="binding site" description="in other chain" evidence="1">
    <location>
        <position position="225"/>
    </location>
    <ligand>
        <name>IMP</name>
        <dbReference type="ChEBI" id="CHEBI:58053"/>
        <note>ligand shared between dimeric partners</note>
    </ligand>
</feature>
<feature type="binding site" description="in other chain" evidence="1">
    <location>
        <position position="240"/>
    </location>
    <ligand>
        <name>IMP</name>
        <dbReference type="ChEBI" id="CHEBI:58053"/>
        <note>ligand shared between dimeric partners</note>
    </ligand>
</feature>
<feature type="binding site" evidence="1">
    <location>
        <begin position="300"/>
        <end position="306"/>
    </location>
    <ligand>
        <name>substrate</name>
    </ligand>
</feature>
<feature type="binding site" description="in other chain" evidence="1">
    <location>
        <position position="304"/>
    </location>
    <ligand>
        <name>IMP</name>
        <dbReference type="ChEBI" id="CHEBI:58053"/>
        <note>ligand shared between dimeric partners</note>
    </ligand>
</feature>
<feature type="binding site" evidence="1">
    <location>
        <position position="306"/>
    </location>
    <ligand>
        <name>GTP</name>
        <dbReference type="ChEBI" id="CHEBI:37565"/>
    </ligand>
</feature>
<feature type="binding site" evidence="1">
    <location>
        <begin position="332"/>
        <end position="334"/>
    </location>
    <ligand>
        <name>GTP</name>
        <dbReference type="ChEBI" id="CHEBI:37565"/>
    </ligand>
</feature>
<feature type="binding site" evidence="1">
    <location>
        <begin position="414"/>
        <end position="416"/>
    </location>
    <ligand>
        <name>GTP</name>
        <dbReference type="ChEBI" id="CHEBI:37565"/>
    </ligand>
</feature>
<sequence length="430" mass="46626">MGQSVVVLGAQWGDEGKGKIVDLLTEEIGAVVRFQGGHNAGHTLVINGKKTVLHLIPSGILRNGVLCLIGNGVVISPAALRKEIEELEDTGLEIRSRLKISPAAPLIMEYHIALDQAREKAAGGRAIGTTGRGIGPAYEDKVGRRGIRVADLHYPDQLAEKLRAALDYHNFVLTRYFGVDGMDFQRIYDEMLVFAEYVEPMKSDVAGILHDLRKQGKRVLFEGAQGTLLDIDHGTYPYVTSSSTTVGGALSGAGVGVQDIDYVLGIAKAYATRVGGGPFPTELDDKIGQGIRDRGVEYGASTGRPRRCGWMDIVALKRAVAINGITGLCITKLDVLDGMDKLKICIAYEYHDKRSEYAPLDAQGWEECTPVYLEFPGWNESTHGITSWEKLPPAARAYLCALEELAGCPIGIVSTGPDREHTIMLHDPFA</sequence>
<keyword id="KW-0963">Cytoplasm</keyword>
<keyword id="KW-0342">GTP-binding</keyword>
<keyword id="KW-0436">Ligase</keyword>
<keyword id="KW-0460">Magnesium</keyword>
<keyword id="KW-0479">Metal-binding</keyword>
<keyword id="KW-0547">Nucleotide-binding</keyword>
<keyword id="KW-0658">Purine biosynthesis</keyword>
<organism>
    <name type="scientific">Xylella fastidiosa (strain M12)</name>
    <dbReference type="NCBI Taxonomy" id="405440"/>
    <lineage>
        <taxon>Bacteria</taxon>
        <taxon>Pseudomonadati</taxon>
        <taxon>Pseudomonadota</taxon>
        <taxon>Gammaproteobacteria</taxon>
        <taxon>Lysobacterales</taxon>
        <taxon>Lysobacteraceae</taxon>
        <taxon>Xylella</taxon>
    </lineage>
</organism>
<accession>B0U498</accession>
<name>PURA_XYLFM</name>
<evidence type="ECO:0000255" key="1">
    <source>
        <dbReference type="HAMAP-Rule" id="MF_00011"/>
    </source>
</evidence>
<comment type="function">
    <text evidence="1">Plays an important role in the de novo pathway of purine nucleotide biosynthesis. Catalyzes the first committed step in the biosynthesis of AMP from IMP.</text>
</comment>
<comment type="catalytic activity">
    <reaction evidence="1">
        <text>IMP + L-aspartate + GTP = N(6)-(1,2-dicarboxyethyl)-AMP + GDP + phosphate + 2 H(+)</text>
        <dbReference type="Rhea" id="RHEA:15753"/>
        <dbReference type="ChEBI" id="CHEBI:15378"/>
        <dbReference type="ChEBI" id="CHEBI:29991"/>
        <dbReference type="ChEBI" id="CHEBI:37565"/>
        <dbReference type="ChEBI" id="CHEBI:43474"/>
        <dbReference type="ChEBI" id="CHEBI:57567"/>
        <dbReference type="ChEBI" id="CHEBI:58053"/>
        <dbReference type="ChEBI" id="CHEBI:58189"/>
        <dbReference type="EC" id="6.3.4.4"/>
    </reaction>
</comment>
<comment type="cofactor">
    <cofactor evidence="1">
        <name>Mg(2+)</name>
        <dbReference type="ChEBI" id="CHEBI:18420"/>
    </cofactor>
    <text evidence="1">Binds 1 Mg(2+) ion per subunit.</text>
</comment>
<comment type="pathway">
    <text evidence="1">Purine metabolism; AMP biosynthesis via de novo pathway; AMP from IMP: step 1/2.</text>
</comment>
<comment type="subunit">
    <text evidence="1">Homodimer.</text>
</comment>
<comment type="subcellular location">
    <subcellularLocation>
        <location evidence="1">Cytoplasm</location>
    </subcellularLocation>
</comment>
<comment type="similarity">
    <text evidence="1">Belongs to the adenylosuccinate synthetase family.</text>
</comment>
<gene>
    <name evidence="1" type="primary">purA</name>
    <name type="ordered locus">Xfasm12_1784</name>
</gene>
<protein>
    <recommendedName>
        <fullName evidence="1">Adenylosuccinate synthetase</fullName>
        <shortName evidence="1">AMPSase</shortName>
        <shortName evidence="1">AdSS</shortName>
        <ecNumber evidence="1">6.3.4.4</ecNumber>
    </recommendedName>
    <alternativeName>
        <fullName evidence="1">IMP--aspartate ligase</fullName>
    </alternativeName>
</protein>